<proteinExistence type="inferred from homology"/>
<accession>A1A777</accession>
<name>ISPH_ECOK1</name>
<dbReference type="EC" id="1.17.7.4" evidence="1"/>
<dbReference type="EMBL" id="CP000468">
    <property type="protein sequence ID" value="ABI99516.1"/>
    <property type="molecule type" value="Genomic_DNA"/>
</dbReference>
<dbReference type="RefSeq" id="WP_001166403.1">
    <property type="nucleotide sequence ID" value="NZ_CADILS010000013.1"/>
</dbReference>
<dbReference type="SMR" id="A1A777"/>
<dbReference type="KEGG" id="ecv:APECO1_1954"/>
<dbReference type="HOGENOM" id="CLU_027486_1_0_6"/>
<dbReference type="UniPathway" id="UPA00056">
    <property type="reaction ID" value="UER00097"/>
</dbReference>
<dbReference type="UniPathway" id="UPA00059">
    <property type="reaction ID" value="UER00105"/>
</dbReference>
<dbReference type="Proteomes" id="UP000008216">
    <property type="component" value="Chromosome"/>
</dbReference>
<dbReference type="GO" id="GO:0051539">
    <property type="term" value="F:4 iron, 4 sulfur cluster binding"/>
    <property type="evidence" value="ECO:0007669"/>
    <property type="project" value="UniProtKB-UniRule"/>
</dbReference>
<dbReference type="GO" id="GO:0051745">
    <property type="term" value="F:4-hydroxy-3-methylbut-2-enyl diphosphate reductase activity"/>
    <property type="evidence" value="ECO:0007669"/>
    <property type="project" value="UniProtKB-UniRule"/>
</dbReference>
<dbReference type="GO" id="GO:0046872">
    <property type="term" value="F:metal ion binding"/>
    <property type="evidence" value="ECO:0007669"/>
    <property type="project" value="UniProtKB-KW"/>
</dbReference>
<dbReference type="GO" id="GO:0050992">
    <property type="term" value="P:dimethylallyl diphosphate biosynthetic process"/>
    <property type="evidence" value="ECO:0007669"/>
    <property type="project" value="UniProtKB-UniRule"/>
</dbReference>
<dbReference type="GO" id="GO:0019288">
    <property type="term" value="P:isopentenyl diphosphate biosynthetic process, methylerythritol 4-phosphate pathway"/>
    <property type="evidence" value="ECO:0007669"/>
    <property type="project" value="UniProtKB-UniRule"/>
</dbReference>
<dbReference type="GO" id="GO:0016114">
    <property type="term" value="P:terpenoid biosynthetic process"/>
    <property type="evidence" value="ECO:0007669"/>
    <property type="project" value="UniProtKB-UniRule"/>
</dbReference>
<dbReference type="CDD" id="cd13944">
    <property type="entry name" value="lytB_ispH"/>
    <property type="match status" value="1"/>
</dbReference>
<dbReference type="FunFam" id="3.40.1010.20:FF:000001">
    <property type="entry name" value="4-hydroxy-3-methylbut-2-enyl diphosphate reductase"/>
    <property type="match status" value="1"/>
</dbReference>
<dbReference type="FunFam" id="3.40.50.11270:FF:000001">
    <property type="entry name" value="4-hydroxy-3-methylbut-2-enyl diphosphate reductase"/>
    <property type="match status" value="1"/>
</dbReference>
<dbReference type="Gene3D" id="3.40.50.11270">
    <property type="match status" value="1"/>
</dbReference>
<dbReference type="Gene3D" id="3.40.1010.20">
    <property type="entry name" value="4-hydroxy-3-methylbut-2-enyl diphosphate reductase, catalytic domain"/>
    <property type="match status" value="2"/>
</dbReference>
<dbReference type="HAMAP" id="MF_00191">
    <property type="entry name" value="IspH"/>
    <property type="match status" value="1"/>
</dbReference>
<dbReference type="InterPro" id="IPR003451">
    <property type="entry name" value="LytB/IspH"/>
</dbReference>
<dbReference type="NCBIfam" id="TIGR00216">
    <property type="entry name" value="ispH_lytB"/>
    <property type="match status" value="1"/>
</dbReference>
<dbReference type="NCBIfam" id="NF002188">
    <property type="entry name" value="PRK01045.1-2"/>
    <property type="match status" value="1"/>
</dbReference>
<dbReference type="NCBIfam" id="NF002190">
    <property type="entry name" value="PRK01045.1-4"/>
    <property type="match status" value="1"/>
</dbReference>
<dbReference type="PANTHER" id="PTHR30426">
    <property type="entry name" value="4-HYDROXY-3-METHYLBUT-2-ENYL DIPHOSPHATE REDUCTASE"/>
    <property type="match status" value="1"/>
</dbReference>
<dbReference type="PANTHER" id="PTHR30426:SF0">
    <property type="entry name" value="4-HYDROXY-3-METHYLBUT-2-ENYL DIPHOSPHATE REDUCTASE"/>
    <property type="match status" value="1"/>
</dbReference>
<dbReference type="Pfam" id="PF02401">
    <property type="entry name" value="LYTB"/>
    <property type="match status" value="1"/>
</dbReference>
<gene>
    <name evidence="1" type="primary">ispH</name>
    <name type="ordered locus">Ecok1_00230</name>
    <name type="ORF">APECO1_1954</name>
</gene>
<comment type="function">
    <text evidence="1">Catalyzes the conversion of 1-hydroxy-2-methyl-2-(E)-butenyl 4-diphosphate (HMBPP) into a mixture of isopentenyl diphosphate (IPP) and dimethylallyl diphosphate (DMAPP). Acts in the terminal step of the DOXP/MEP pathway for isoprenoid precursor biosynthesis.</text>
</comment>
<comment type="catalytic activity">
    <reaction evidence="1">
        <text>isopentenyl diphosphate + 2 oxidized [2Fe-2S]-[ferredoxin] + H2O = (2E)-4-hydroxy-3-methylbut-2-enyl diphosphate + 2 reduced [2Fe-2S]-[ferredoxin] + 2 H(+)</text>
        <dbReference type="Rhea" id="RHEA:24488"/>
        <dbReference type="Rhea" id="RHEA-COMP:10000"/>
        <dbReference type="Rhea" id="RHEA-COMP:10001"/>
        <dbReference type="ChEBI" id="CHEBI:15377"/>
        <dbReference type="ChEBI" id="CHEBI:15378"/>
        <dbReference type="ChEBI" id="CHEBI:33737"/>
        <dbReference type="ChEBI" id="CHEBI:33738"/>
        <dbReference type="ChEBI" id="CHEBI:128753"/>
        <dbReference type="ChEBI" id="CHEBI:128769"/>
        <dbReference type="EC" id="1.17.7.4"/>
    </reaction>
</comment>
<comment type="catalytic activity">
    <reaction evidence="1">
        <text>dimethylallyl diphosphate + 2 oxidized [2Fe-2S]-[ferredoxin] + H2O = (2E)-4-hydroxy-3-methylbut-2-enyl diphosphate + 2 reduced [2Fe-2S]-[ferredoxin] + 2 H(+)</text>
        <dbReference type="Rhea" id="RHEA:24825"/>
        <dbReference type="Rhea" id="RHEA-COMP:10000"/>
        <dbReference type="Rhea" id="RHEA-COMP:10001"/>
        <dbReference type="ChEBI" id="CHEBI:15377"/>
        <dbReference type="ChEBI" id="CHEBI:15378"/>
        <dbReference type="ChEBI" id="CHEBI:33737"/>
        <dbReference type="ChEBI" id="CHEBI:33738"/>
        <dbReference type="ChEBI" id="CHEBI:57623"/>
        <dbReference type="ChEBI" id="CHEBI:128753"/>
        <dbReference type="EC" id="1.17.7.4"/>
    </reaction>
</comment>
<comment type="cofactor">
    <cofactor evidence="1">
        <name>[4Fe-4S] cluster</name>
        <dbReference type="ChEBI" id="CHEBI:49883"/>
    </cofactor>
    <text evidence="1">Binds 1 [4Fe-4S] cluster per subunit.</text>
</comment>
<comment type="pathway">
    <text evidence="1">Isoprenoid biosynthesis; dimethylallyl diphosphate biosynthesis; dimethylallyl diphosphate from (2E)-4-hydroxy-3-methylbutenyl diphosphate: step 1/1.</text>
</comment>
<comment type="pathway">
    <text evidence="1">Isoprenoid biosynthesis; isopentenyl diphosphate biosynthesis via DXP pathway; isopentenyl diphosphate from 1-deoxy-D-xylulose 5-phosphate: step 6/6.</text>
</comment>
<comment type="subunit">
    <text evidence="1">Homodimer.</text>
</comment>
<comment type="similarity">
    <text evidence="1">Belongs to the IspH family.</text>
</comment>
<protein>
    <recommendedName>
        <fullName evidence="1">4-hydroxy-3-methylbut-2-enyl diphosphate reductase</fullName>
        <shortName evidence="1">HMBPP reductase</shortName>
        <ecNumber evidence="1">1.17.7.4</ecNumber>
    </recommendedName>
</protein>
<feature type="chain" id="PRO_1000021116" description="4-hydroxy-3-methylbut-2-enyl diphosphate reductase">
    <location>
        <begin position="1"/>
        <end position="316"/>
    </location>
</feature>
<feature type="active site" description="Proton donor" evidence="1">
    <location>
        <position position="126"/>
    </location>
</feature>
<feature type="binding site" evidence="1">
    <location>
        <position position="12"/>
    </location>
    <ligand>
        <name>[4Fe-4S] cluster</name>
        <dbReference type="ChEBI" id="CHEBI:49883"/>
    </ligand>
</feature>
<feature type="binding site" evidence="1">
    <location>
        <position position="41"/>
    </location>
    <ligand>
        <name>(2E)-4-hydroxy-3-methylbut-2-enyl diphosphate</name>
        <dbReference type="ChEBI" id="CHEBI:128753"/>
    </ligand>
</feature>
<feature type="binding site" evidence="1">
    <location>
        <position position="41"/>
    </location>
    <ligand>
        <name>dimethylallyl diphosphate</name>
        <dbReference type="ChEBI" id="CHEBI:57623"/>
    </ligand>
</feature>
<feature type="binding site" evidence="1">
    <location>
        <position position="41"/>
    </location>
    <ligand>
        <name>isopentenyl diphosphate</name>
        <dbReference type="ChEBI" id="CHEBI:128769"/>
    </ligand>
</feature>
<feature type="binding site" evidence="1">
    <location>
        <position position="74"/>
    </location>
    <ligand>
        <name>(2E)-4-hydroxy-3-methylbut-2-enyl diphosphate</name>
        <dbReference type="ChEBI" id="CHEBI:128753"/>
    </ligand>
</feature>
<feature type="binding site" evidence="1">
    <location>
        <position position="74"/>
    </location>
    <ligand>
        <name>dimethylallyl diphosphate</name>
        <dbReference type="ChEBI" id="CHEBI:57623"/>
    </ligand>
</feature>
<feature type="binding site" evidence="1">
    <location>
        <position position="74"/>
    </location>
    <ligand>
        <name>isopentenyl diphosphate</name>
        <dbReference type="ChEBI" id="CHEBI:128769"/>
    </ligand>
</feature>
<feature type="binding site" evidence="1">
    <location>
        <position position="96"/>
    </location>
    <ligand>
        <name>[4Fe-4S] cluster</name>
        <dbReference type="ChEBI" id="CHEBI:49883"/>
    </ligand>
</feature>
<feature type="binding site" evidence="1">
    <location>
        <position position="124"/>
    </location>
    <ligand>
        <name>(2E)-4-hydroxy-3-methylbut-2-enyl diphosphate</name>
        <dbReference type="ChEBI" id="CHEBI:128753"/>
    </ligand>
</feature>
<feature type="binding site" evidence="1">
    <location>
        <position position="124"/>
    </location>
    <ligand>
        <name>dimethylallyl diphosphate</name>
        <dbReference type="ChEBI" id="CHEBI:57623"/>
    </ligand>
</feature>
<feature type="binding site" evidence="1">
    <location>
        <position position="124"/>
    </location>
    <ligand>
        <name>isopentenyl diphosphate</name>
        <dbReference type="ChEBI" id="CHEBI:128769"/>
    </ligand>
</feature>
<feature type="binding site" evidence="1">
    <location>
        <position position="167"/>
    </location>
    <ligand>
        <name>(2E)-4-hydroxy-3-methylbut-2-enyl diphosphate</name>
        <dbReference type="ChEBI" id="CHEBI:128753"/>
    </ligand>
</feature>
<feature type="binding site" evidence="1">
    <location>
        <position position="197"/>
    </location>
    <ligand>
        <name>[4Fe-4S] cluster</name>
        <dbReference type="ChEBI" id="CHEBI:49883"/>
    </ligand>
</feature>
<feature type="binding site" evidence="1">
    <location>
        <position position="225"/>
    </location>
    <ligand>
        <name>(2E)-4-hydroxy-3-methylbut-2-enyl diphosphate</name>
        <dbReference type="ChEBI" id="CHEBI:128753"/>
    </ligand>
</feature>
<feature type="binding site" evidence="1">
    <location>
        <position position="225"/>
    </location>
    <ligand>
        <name>dimethylallyl diphosphate</name>
        <dbReference type="ChEBI" id="CHEBI:57623"/>
    </ligand>
</feature>
<feature type="binding site" evidence="1">
    <location>
        <position position="225"/>
    </location>
    <ligand>
        <name>isopentenyl diphosphate</name>
        <dbReference type="ChEBI" id="CHEBI:128769"/>
    </ligand>
</feature>
<feature type="binding site" evidence="1">
    <location>
        <position position="226"/>
    </location>
    <ligand>
        <name>(2E)-4-hydroxy-3-methylbut-2-enyl diphosphate</name>
        <dbReference type="ChEBI" id="CHEBI:128753"/>
    </ligand>
</feature>
<feature type="binding site" evidence="1">
    <location>
        <position position="226"/>
    </location>
    <ligand>
        <name>dimethylallyl diphosphate</name>
        <dbReference type="ChEBI" id="CHEBI:57623"/>
    </ligand>
</feature>
<feature type="binding site" evidence="1">
    <location>
        <position position="226"/>
    </location>
    <ligand>
        <name>isopentenyl diphosphate</name>
        <dbReference type="ChEBI" id="CHEBI:128769"/>
    </ligand>
</feature>
<feature type="binding site" evidence="1">
    <location>
        <position position="227"/>
    </location>
    <ligand>
        <name>(2E)-4-hydroxy-3-methylbut-2-enyl diphosphate</name>
        <dbReference type="ChEBI" id="CHEBI:128753"/>
    </ligand>
</feature>
<feature type="binding site" evidence="1">
    <location>
        <position position="227"/>
    </location>
    <ligand>
        <name>dimethylallyl diphosphate</name>
        <dbReference type="ChEBI" id="CHEBI:57623"/>
    </ligand>
</feature>
<feature type="binding site" evidence="1">
    <location>
        <position position="227"/>
    </location>
    <ligand>
        <name>isopentenyl diphosphate</name>
        <dbReference type="ChEBI" id="CHEBI:128769"/>
    </ligand>
</feature>
<feature type="binding site" evidence="1">
    <location>
        <position position="269"/>
    </location>
    <ligand>
        <name>(2E)-4-hydroxy-3-methylbut-2-enyl diphosphate</name>
        <dbReference type="ChEBI" id="CHEBI:128753"/>
    </ligand>
</feature>
<feature type="binding site" evidence="1">
    <location>
        <position position="269"/>
    </location>
    <ligand>
        <name>dimethylallyl diphosphate</name>
        <dbReference type="ChEBI" id="CHEBI:57623"/>
    </ligand>
</feature>
<feature type="binding site" evidence="1">
    <location>
        <position position="269"/>
    </location>
    <ligand>
        <name>isopentenyl diphosphate</name>
        <dbReference type="ChEBI" id="CHEBI:128769"/>
    </ligand>
</feature>
<reference key="1">
    <citation type="journal article" date="2007" name="J. Bacteriol.">
        <title>The genome sequence of avian pathogenic Escherichia coli strain O1:K1:H7 shares strong similarities with human extraintestinal pathogenic E. coli genomes.</title>
        <authorList>
            <person name="Johnson T.J."/>
            <person name="Kariyawasam S."/>
            <person name="Wannemuehler Y."/>
            <person name="Mangiamele P."/>
            <person name="Johnson S.J."/>
            <person name="Doetkott C."/>
            <person name="Skyberg J.A."/>
            <person name="Lynne A.M."/>
            <person name="Johnson J.R."/>
            <person name="Nolan L.K."/>
        </authorList>
    </citation>
    <scope>NUCLEOTIDE SEQUENCE [LARGE SCALE GENOMIC DNA]</scope>
</reference>
<sequence length="316" mass="34719">MQILLANPRGFCAGVDRAISIVENALAIYGAPIYVRHEVVHNRYVVDSLRERGAIFIEQISEVPDGAILIFSAHGVSQAVRNEAKSRDLTVFDATCPLVTKVHMEVARASRRGEESILIGHAGHPEVEGTMGQYSNPEGGMYLVESPDDVWKLTVKNEEKLSFMTQTTLSVDDTSDVIDALRKRFPKIVGPRKDDICYATTNRQEAVRALAEQAEVVLVVGSKNSSNSNRLAELAQRMGKRAFLIDDATDIQEEWVKEAKCVGVTAGASAPDILVQNVVARLQQLGGGEAIPLEGREENIVFEVPKELRVDIREVD</sequence>
<organism>
    <name type="scientific">Escherichia coli O1:K1 / APEC</name>
    <dbReference type="NCBI Taxonomy" id="405955"/>
    <lineage>
        <taxon>Bacteria</taxon>
        <taxon>Pseudomonadati</taxon>
        <taxon>Pseudomonadota</taxon>
        <taxon>Gammaproteobacteria</taxon>
        <taxon>Enterobacterales</taxon>
        <taxon>Enterobacteriaceae</taxon>
        <taxon>Escherichia</taxon>
    </lineage>
</organism>
<keyword id="KW-0004">4Fe-4S</keyword>
<keyword id="KW-0408">Iron</keyword>
<keyword id="KW-0411">Iron-sulfur</keyword>
<keyword id="KW-0414">Isoprene biosynthesis</keyword>
<keyword id="KW-0479">Metal-binding</keyword>
<keyword id="KW-0560">Oxidoreductase</keyword>
<keyword id="KW-1185">Reference proteome</keyword>
<evidence type="ECO:0000255" key="1">
    <source>
        <dbReference type="HAMAP-Rule" id="MF_00191"/>
    </source>
</evidence>